<protein>
    <recommendedName>
        <fullName evidence="1">L-fucose mutarotase</fullName>
        <ecNumber evidence="1">5.1.3.29</ecNumber>
    </recommendedName>
    <alternativeName>
        <fullName evidence="1">Fucose 1-epimerase</fullName>
    </alternativeName>
    <alternativeName>
        <fullName evidence="1">Type-2 mutarotase</fullName>
    </alternativeName>
</protein>
<organism>
    <name type="scientific">Histophilus somni (strain 2336)</name>
    <name type="common">Haemophilus somnus</name>
    <dbReference type="NCBI Taxonomy" id="228400"/>
    <lineage>
        <taxon>Bacteria</taxon>
        <taxon>Pseudomonadati</taxon>
        <taxon>Pseudomonadota</taxon>
        <taxon>Gammaproteobacteria</taxon>
        <taxon>Pasteurellales</taxon>
        <taxon>Pasteurellaceae</taxon>
        <taxon>Histophilus</taxon>
    </lineage>
</organism>
<reference key="1">
    <citation type="submission" date="2008-02" db="EMBL/GenBank/DDBJ databases">
        <title>Complete sequence of Haemophilus somnus 2336.</title>
        <authorList>
            <consortium name="US DOE Joint Genome Institute"/>
            <person name="Siddaramappa S."/>
            <person name="Duncan A.J."/>
            <person name="Challacombe J.F."/>
            <person name="Rainey D."/>
            <person name="Gillaspy A.F."/>
            <person name="Carson M."/>
            <person name="Gipson J."/>
            <person name="Gipson M."/>
            <person name="Bruce D."/>
            <person name="Detter J.C."/>
            <person name="Han C.S."/>
            <person name="Land M."/>
            <person name="Tapia R."/>
            <person name="Thompson L.S."/>
            <person name="Orvis J."/>
            <person name="Zaitshik J."/>
            <person name="Barnes G."/>
            <person name="Brettin T.S."/>
            <person name="Dyer D.W."/>
            <person name="Inzana T.J."/>
        </authorList>
    </citation>
    <scope>NUCLEOTIDE SEQUENCE [LARGE SCALE GENOMIC DNA]</scope>
    <source>
        <strain>2336</strain>
    </source>
</reference>
<dbReference type="EC" id="5.1.3.29" evidence="1"/>
<dbReference type="EMBL" id="CP000947">
    <property type="protein sequence ID" value="ACA32233.1"/>
    <property type="molecule type" value="Genomic_DNA"/>
</dbReference>
<dbReference type="RefSeq" id="WP_012341412.1">
    <property type="nucleotide sequence ID" value="NC_010519.1"/>
</dbReference>
<dbReference type="SMR" id="B0US22"/>
<dbReference type="STRING" id="228400.HSM_0581"/>
<dbReference type="GeneID" id="31486866"/>
<dbReference type="KEGG" id="hsm:HSM_0581"/>
<dbReference type="HOGENOM" id="CLU_120075_1_0_6"/>
<dbReference type="UniPathway" id="UPA00956"/>
<dbReference type="GO" id="GO:0005737">
    <property type="term" value="C:cytoplasm"/>
    <property type="evidence" value="ECO:0007669"/>
    <property type="project" value="UniProtKB-SubCell"/>
</dbReference>
<dbReference type="GO" id="GO:0042806">
    <property type="term" value="F:fucose binding"/>
    <property type="evidence" value="ECO:0007669"/>
    <property type="project" value="InterPro"/>
</dbReference>
<dbReference type="GO" id="GO:0036373">
    <property type="term" value="F:L-fucose mutarotase activity"/>
    <property type="evidence" value="ECO:0007669"/>
    <property type="project" value="UniProtKB-EC"/>
</dbReference>
<dbReference type="GO" id="GO:0036065">
    <property type="term" value="P:fucosylation"/>
    <property type="evidence" value="ECO:0007669"/>
    <property type="project" value="TreeGrafter"/>
</dbReference>
<dbReference type="GO" id="GO:0042354">
    <property type="term" value="P:L-fucose metabolic process"/>
    <property type="evidence" value="ECO:0007669"/>
    <property type="project" value="UniProtKB-UniRule"/>
</dbReference>
<dbReference type="Gene3D" id="3.40.1650.10">
    <property type="entry name" value="RbsD-like domain"/>
    <property type="match status" value="1"/>
</dbReference>
<dbReference type="HAMAP" id="MF_01662">
    <property type="entry name" value="L_fucose_rotase"/>
    <property type="match status" value="1"/>
</dbReference>
<dbReference type="InterPro" id="IPR023751">
    <property type="entry name" value="L-fucose_mutarotase"/>
</dbReference>
<dbReference type="InterPro" id="IPR023750">
    <property type="entry name" value="RbsD-like_sf"/>
</dbReference>
<dbReference type="InterPro" id="IPR050443">
    <property type="entry name" value="RbsD/FucU_mutarotase"/>
</dbReference>
<dbReference type="InterPro" id="IPR007721">
    <property type="entry name" value="RbsD_FucU"/>
</dbReference>
<dbReference type="NCBIfam" id="NF011949">
    <property type="entry name" value="PRK15420.1"/>
    <property type="match status" value="1"/>
</dbReference>
<dbReference type="PANTHER" id="PTHR31690">
    <property type="entry name" value="FUCOSE MUTAROTASE"/>
    <property type="match status" value="1"/>
</dbReference>
<dbReference type="PANTHER" id="PTHR31690:SF4">
    <property type="entry name" value="FUCOSE MUTAROTASE"/>
    <property type="match status" value="1"/>
</dbReference>
<dbReference type="Pfam" id="PF05025">
    <property type="entry name" value="RbsD_FucU"/>
    <property type="match status" value="1"/>
</dbReference>
<dbReference type="SUPFAM" id="SSF102546">
    <property type="entry name" value="RbsD-like"/>
    <property type="match status" value="1"/>
</dbReference>
<keyword id="KW-0119">Carbohydrate metabolism</keyword>
<keyword id="KW-0963">Cytoplasm</keyword>
<keyword id="KW-0294">Fucose metabolism</keyword>
<keyword id="KW-0413">Isomerase</keyword>
<feature type="chain" id="PRO_1000187186" description="L-fucose mutarotase">
    <location>
        <begin position="1"/>
        <end position="144"/>
    </location>
</feature>
<feature type="active site" description="Proton donor" evidence="1">
    <location>
        <position position="22"/>
    </location>
</feature>
<feature type="binding site" evidence="1">
    <location>
        <position position="30"/>
    </location>
    <ligand>
        <name>substrate</name>
    </ligand>
</feature>
<feature type="binding site" evidence="1">
    <location>
        <position position="109"/>
    </location>
    <ligand>
        <name>substrate</name>
    </ligand>
</feature>
<feature type="binding site" evidence="1">
    <location>
        <begin position="131"/>
        <end position="133"/>
    </location>
    <ligand>
        <name>substrate</name>
    </ligand>
</feature>
<sequence length="144" mass="15756">MLKGIHPAISPDLLKILAEMGHGDELVLSDAHFPAHQLHHKVVRADGISINSLLTGITPLFEFDTYTEAPLIMMQAVEGDSLDPAVEQSYLQTIKSAVGNVPKLARMDRFAFYERAKQAYAVVITGETAKYGNIIIKKGVTPVK</sequence>
<gene>
    <name evidence="1" type="primary">fucU</name>
    <name type="ordered locus">HSM_0581</name>
</gene>
<evidence type="ECO:0000255" key="1">
    <source>
        <dbReference type="HAMAP-Rule" id="MF_01662"/>
    </source>
</evidence>
<comment type="function">
    <text evidence="1">Involved in the anomeric conversion of L-fucose.</text>
</comment>
<comment type="catalytic activity">
    <reaction evidence="1">
        <text>alpha-L-fucose = beta-L-fucose</text>
        <dbReference type="Rhea" id="RHEA:25580"/>
        <dbReference type="ChEBI" id="CHEBI:42548"/>
        <dbReference type="ChEBI" id="CHEBI:42589"/>
        <dbReference type="EC" id="5.1.3.29"/>
    </reaction>
</comment>
<comment type="pathway">
    <text evidence="1">Carbohydrate metabolism; L-fucose metabolism.</text>
</comment>
<comment type="subunit">
    <text evidence="1">Homodecamer.</text>
</comment>
<comment type="subcellular location">
    <subcellularLocation>
        <location evidence="1">Cytoplasm</location>
    </subcellularLocation>
</comment>
<comment type="similarity">
    <text evidence="1">Belongs to the RbsD / FucU family. FucU mutarotase subfamily.</text>
</comment>
<proteinExistence type="inferred from homology"/>
<name>FUCM_HISS2</name>
<accession>B0US22</accession>